<protein>
    <recommendedName>
        <fullName evidence="1">tRNA 2-selenouridine synthase</fullName>
        <ecNumber evidence="1">2.9.1.3</ecNumber>
    </recommendedName>
</protein>
<comment type="function">
    <text evidence="1">Involved in the post-transcriptional modification of the uridine at the wobble position (U34) of tRNA(Lys), tRNA(Glu) and tRNA(Gln). Catalyzes the conversion of 2-thiouridine (S2U-RNA) to 2-selenouridine (Se2U-RNA). Acts in a two-step process involving geranylation of 2-thiouridine (S2U) to S-geranyl-2-thiouridine (geS2U) and subsequent selenation of the latter derivative to 2-selenouridine (Se2U) in the tRNA chain.</text>
</comment>
<comment type="catalytic activity">
    <reaction evidence="1">
        <text>5-methylaminomethyl-2-thiouridine(34) in tRNA + selenophosphate + (2E)-geranyl diphosphate + H2O + H(+) = 5-methylaminomethyl-2-selenouridine(34) in tRNA + (2E)-thiogeraniol + phosphate + diphosphate</text>
        <dbReference type="Rhea" id="RHEA:42716"/>
        <dbReference type="Rhea" id="RHEA-COMP:10195"/>
        <dbReference type="Rhea" id="RHEA-COMP:10196"/>
        <dbReference type="ChEBI" id="CHEBI:15377"/>
        <dbReference type="ChEBI" id="CHEBI:15378"/>
        <dbReference type="ChEBI" id="CHEBI:16144"/>
        <dbReference type="ChEBI" id="CHEBI:33019"/>
        <dbReference type="ChEBI" id="CHEBI:43474"/>
        <dbReference type="ChEBI" id="CHEBI:58057"/>
        <dbReference type="ChEBI" id="CHEBI:74455"/>
        <dbReference type="ChEBI" id="CHEBI:82743"/>
        <dbReference type="ChEBI" id="CHEBI:143703"/>
        <dbReference type="EC" id="2.9.1.3"/>
    </reaction>
    <physiologicalReaction direction="left-to-right" evidence="1">
        <dbReference type="Rhea" id="RHEA:42717"/>
    </physiologicalReaction>
</comment>
<comment type="catalytic activity">
    <reaction evidence="1">
        <text>5-methylaminomethyl-2-thiouridine(34) in tRNA + (2E)-geranyl diphosphate = 5-methylaminomethyl-S-(2E)-geranyl-thiouridine(34) in tRNA + diphosphate</text>
        <dbReference type="Rhea" id="RHEA:14085"/>
        <dbReference type="Rhea" id="RHEA-COMP:10195"/>
        <dbReference type="Rhea" id="RHEA-COMP:14654"/>
        <dbReference type="ChEBI" id="CHEBI:33019"/>
        <dbReference type="ChEBI" id="CHEBI:58057"/>
        <dbReference type="ChEBI" id="CHEBI:74455"/>
        <dbReference type="ChEBI" id="CHEBI:140632"/>
    </reaction>
    <physiologicalReaction direction="left-to-right" evidence="1">
        <dbReference type="Rhea" id="RHEA:14086"/>
    </physiologicalReaction>
</comment>
<comment type="catalytic activity">
    <reaction evidence="1">
        <text>5-methylaminomethyl-S-(2E)-geranyl-thiouridine(34) in tRNA + selenophosphate + H(+) = 5-methylaminomethyl-2-(Se-phospho)selenouridine(34) in tRNA + (2E)-thiogeraniol</text>
        <dbReference type="Rhea" id="RHEA:60172"/>
        <dbReference type="Rhea" id="RHEA-COMP:14654"/>
        <dbReference type="Rhea" id="RHEA-COMP:15523"/>
        <dbReference type="ChEBI" id="CHEBI:15378"/>
        <dbReference type="ChEBI" id="CHEBI:16144"/>
        <dbReference type="ChEBI" id="CHEBI:140632"/>
        <dbReference type="ChEBI" id="CHEBI:143702"/>
        <dbReference type="ChEBI" id="CHEBI:143703"/>
    </reaction>
    <physiologicalReaction direction="left-to-right" evidence="1">
        <dbReference type="Rhea" id="RHEA:60173"/>
    </physiologicalReaction>
</comment>
<comment type="catalytic activity">
    <reaction evidence="1">
        <text>5-methylaminomethyl-2-(Se-phospho)selenouridine(34) in tRNA + H2O = 5-methylaminomethyl-2-selenouridine(34) in tRNA + phosphate</text>
        <dbReference type="Rhea" id="RHEA:60176"/>
        <dbReference type="Rhea" id="RHEA-COMP:10196"/>
        <dbReference type="Rhea" id="RHEA-COMP:15523"/>
        <dbReference type="ChEBI" id="CHEBI:15377"/>
        <dbReference type="ChEBI" id="CHEBI:43474"/>
        <dbReference type="ChEBI" id="CHEBI:82743"/>
        <dbReference type="ChEBI" id="CHEBI:143702"/>
    </reaction>
    <physiologicalReaction direction="left-to-right" evidence="1">
        <dbReference type="Rhea" id="RHEA:60177"/>
    </physiologicalReaction>
</comment>
<comment type="subunit">
    <text evidence="1">Monomer.</text>
</comment>
<comment type="similarity">
    <text evidence="1">Belongs to the SelU family.</text>
</comment>
<accession>B0TMW0</accession>
<keyword id="KW-0711">Selenium</keyword>
<keyword id="KW-0808">Transferase</keyword>
<evidence type="ECO:0000255" key="1">
    <source>
        <dbReference type="HAMAP-Rule" id="MF_01622"/>
    </source>
</evidence>
<proteinExistence type="inferred from homology"/>
<gene>
    <name evidence="1" type="primary">selU</name>
    <name type="ordered locus">Shal_4158</name>
</gene>
<organism>
    <name type="scientific">Shewanella halifaxensis (strain HAW-EB4)</name>
    <dbReference type="NCBI Taxonomy" id="458817"/>
    <lineage>
        <taxon>Bacteria</taxon>
        <taxon>Pseudomonadati</taxon>
        <taxon>Pseudomonadota</taxon>
        <taxon>Gammaproteobacteria</taxon>
        <taxon>Alteromonadales</taxon>
        <taxon>Shewanellaceae</taxon>
        <taxon>Shewanella</taxon>
    </lineage>
</organism>
<dbReference type="EC" id="2.9.1.3" evidence="1"/>
<dbReference type="EMBL" id="CP000931">
    <property type="protein sequence ID" value="ABZ78698.1"/>
    <property type="molecule type" value="Genomic_DNA"/>
</dbReference>
<dbReference type="RefSeq" id="WP_012279202.1">
    <property type="nucleotide sequence ID" value="NC_010334.1"/>
</dbReference>
<dbReference type="SMR" id="B0TMW0"/>
<dbReference type="STRING" id="458817.Shal_4158"/>
<dbReference type="KEGG" id="shl:Shal_4158"/>
<dbReference type="eggNOG" id="COG2603">
    <property type="taxonomic scope" value="Bacteria"/>
</dbReference>
<dbReference type="HOGENOM" id="CLU_043456_1_0_6"/>
<dbReference type="OrthoDB" id="9808735at2"/>
<dbReference type="Proteomes" id="UP000001317">
    <property type="component" value="Chromosome"/>
</dbReference>
<dbReference type="GO" id="GO:0016765">
    <property type="term" value="F:transferase activity, transferring alkyl or aryl (other than methyl) groups"/>
    <property type="evidence" value="ECO:0007669"/>
    <property type="project" value="UniProtKB-UniRule"/>
</dbReference>
<dbReference type="GO" id="GO:0043828">
    <property type="term" value="F:tRNA 2-selenouridine synthase activity"/>
    <property type="evidence" value="ECO:0007669"/>
    <property type="project" value="UniProtKB-EC"/>
</dbReference>
<dbReference type="GO" id="GO:0002098">
    <property type="term" value="P:tRNA wobble uridine modification"/>
    <property type="evidence" value="ECO:0007669"/>
    <property type="project" value="UniProtKB-UniRule"/>
</dbReference>
<dbReference type="Gene3D" id="3.40.250.10">
    <property type="entry name" value="Rhodanese-like domain"/>
    <property type="match status" value="1"/>
</dbReference>
<dbReference type="HAMAP" id="MF_01622">
    <property type="entry name" value="tRNA_sel_U_synth"/>
    <property type="match status" value="1"/>
</dbReference>
<dbReference type="InterPro" id="IPR001763">
    <property type="entry name" value="Rhodanese-like_dom"/>
</dbReference>
<dbReference type="InterPro" id="IPR036873">
    <property type="entry name" value="Rhodanese-like_dom_sf"/>
</dbReference>
<dbReference type="InterPro" id="IPR017582">
    <property type="entry name" value="SelU"/>
</dbReference>
<dbReference type="NCBIfam" id="NF008750">
    <property type="entry name" value="PRK11784.1-2"/>
    <property type="match status" value="1"/>
</dbReference>
<dbReference type="NCBIfam" id="NF008751">
    <property type="entry name" value="PRK11784.1-3"/>
    <property type="match status" value="1"/>
</dbReference>
<dbReference type="NCBIfam" id="TIGR03167">
    <property type="entry name" value="tRNA_sel_U_synt"/>
    <property type="match status" value="1"/>
</dbReference>
<dbReference type="PANTHER" id="PTHR30401">
    <property type="entry name" value="TRNA 2-SELENOURIDINE SYNTHASE"/>
    <property type="match status" value="1"/>
</dbReference>
<dbReference type="PANTHER" id="PTHR30401:SF0">
    <property type="entry name" value="TRNA 2-SELENOURIDINE SYNTHASE"/>
    <property type="match status" value="1"/>
</dbReference>
<dbReference type="SMART" id="SM00450">
    <property type="entry name" value="RHOD"/>
    <property type="match status" value="1"/>
</dbReference>
<dbReference type="SUPFAM" id="SSF52821">
    <property type="entry name" value="Rhodanese/Cell cycle control phosphatase"/>
    <property type="match status" value="1"/>
</dbReference>
<dbReference type="PROSITE" id="PS50206">
    <property type="entry name" value="RHODANESE_3"/>
    <property type="match status" value="1"/>
</dbReference>
<name>SELU_SHEHH</name>
<feature type="chain" id="PRO_1000088090" description="tRNA 2-selenouridine synthase">
    <location>
        <begin position="1"/>
        <end position="365"/>
    </location>
</feature>
<feature type="domain" description="Rhodanese" evidence="1">
    <location>
        <begin position="15"/>
        <end position="138"/>
    </location>
</feature>
<feature type="active site" description="S-selanylcysteine intermediate" evidence="1">
    <location>
        <position position="98"/>
    </location>
</feature>
<sequence length="365" mass="41605">MSLNKVRASEYRRIFVNDHPIMDARAPVEFEKGAFPASVNHPLMEDEERKKVGTCYKERGQEAALKLGHSLVHGEIKQQRVDAWLDFFSKNPDGYLYCFRGGLRSQLTQQWLKEAGLDIPFIEGGYKAMRQFLIETIDDAPNMKPMLILSGITGSGKTDFLLKRKEAVDLEGLAHHRGSSFGRYHEPQPSQINFENALAVALLKHQDSAAKHLLLEDESYLIGRSALPQAFYTGMQAAGVLVLEESLDARLARLLNEYVHKMHSGYIQRLGEEAGFEAFAQYLAQSITGIKKRLGNKQHDEFQAIITNALNIQTSQNDTSAHLEWIELLLVKYYDPMYQYQIDKKADRVIFKGDHQAMHQWLDNH</sequence>
<reference key="1">
    <citation type="submission" date="2008-01" db="EMBL/GenBank/DDBJ databases">
        <title>Complete sequence of Shewanella halifaxensis HAW-EB4.</title>
        <authorList>
            <consortium name="US DOE Joint Genome Institute"/>
            <person name="Copeland A."/>
            <person name="Lucas S."/>
            <person name="Lapidus A."/>
            <person name="Glavina del Rio T."/>
            <person name="Dalin E."/>
            <person name="Tice H."/>
            <person name="Bruce D."/>
            <person name="Goodwin L."/>
            <person name="Pitluck S."/>
            <person name="Sims D."/>
            <person name="Brettin T."/>
            <person name="Detter J.C."/>
            <person name="Han C."/>
            <person name="Kuske C.R."/>
            <person name="Schmutz J."/>
            <person name="Larimer F."/>
            <person name="Land M."/>
            <person name="Hauser L."/>
            <person name="Kyrpides N."/>
            <person name="Kim E."/>
            <person name="Zhao J.-S."/>
            <person name="Richardson P."/>
        </authorList>
    </citation>
    <scope>NUCLEOTIDE SEQUENCE [LARGE SCALE GENOMIC DNA]</scope>
    <source>
        <strain>HAW-EB4</strain>
    </source>
</reference>